<comment type="function">
    <text evidence="1 5">Essential protein required during embryogenesis. Believed to act as a core component of the putative HOPS endosomal tethering complex and of the class C core vacuole/endosome tethering (CORVET) complex. CORVET is required for vacuolar transport of SYP22. HOPS is required for the central vacuole formation. Involved in root development (PubMed:29463724). Plays a role in vesicle-mediated protein trafficking to lysosomal compartments including the endocytic membrane transport pathways (By similarity).</text>
</comment>
<comment type="subunit">
    <text evidence="5">Core component of at least two putative endosomal tethering complexes, the homotypic fusion and vacuole protein sorting (HOPS) complex and the class C core vacuole/endosome tethering (CORVET) complex. Their common core is composed of the class C Vps proteins VPS11, VCL1, VPS18 and VPS33, which in HOPS further associates with VPS39 and VPS41 and in CORVET with VPS3.</text>
</comment>
<comment type="subcellular location">
    <subcellularLocation>
        <location evidence="1">Endosome membrane</location>
        <topology evidence="1">Peripheral membrane protein</topology>
        <orientation evidence="1">Cytoplasmic side</orientation>
    </subcellularLocation>
    <subcellularLocation>
        <location evidence="5">Vacuole membrane</location>
        <topology evidence="5">Peripheral membrane protein</topology>
        <orientation evidence="1">Cytoplasmic side</orientation>
    </subcellularLocation>
    <subcellularLocation>
        <location evidence="5">Cytoplasm</location>
    </subcellularLocation>
    <text evidence="5">Co-localizes with VPS39 at subdomains of the vacuolar membrane, and with VPS3 and RABF2B at punctate compartments in the cytoplasm, with faintly dispersed distribution in the cytosol. Sometimes observed at the vertex zone, the ring-shaped edge of vacuole-vacuole contact sites. Co-localizes with RABG3F.</text>
</comment>
<comment type="disruption phenotype">
    <text evidence="5">Embryonic lethality (PubMed:29463724). Heterozygous mutants produce some yellowish seeds with developmentally retarded or abnormally shaped embryos. Conditional dexamethasone (DEX)-inducible mutants exhibit abnormal root morphology (PubMed:29463724).</text>
</comment>
<comment type="similarity">
    <text evidence="7">Belongs to the VPS18 family.</text>
</comment>
<comment type="sequence caution" evidence="7">
    <conflict type="erroneous gene model prediction">
        <sequence resource="EMBL-CDS" id="AAF79641"/>
    </conflict>
</comment>
<comment type="sequence caution" evidence="7">
    <conflict type="erroneous gene model prediction">
        <sequence resource="EMBL-CDS" id="AAF88074"/>
    </conflict>
</comment>
<evidence type="ECO:0000250" key="1">
    <source>
        <dbReference type="UniProtKB" id="Q9P253"/>
    </source>
</evidence>
<evidence type="ECO:0000255" key="2"/>
<evidence type="ECO:0000255" key="3">
    <source>
        <dbReference type="PROSITE-ProRule" id="PRU00175"/>
    </source>
</evidence>
<evidence type="ECO:0000255" key="4">
    <source>
        <dbReference type="PROSITE-ProRule" id="PRU01006"/>
    </source>
</evidence>
<evidence type="ECO:0000269" key="5">
    <source>
    </source>
</evidence>
<evidence type="ECO:0000303" key="6">
    <source>
    </source>
</evidence>
<evidence type="ECO:0000305" key="7"/>
<evidence type="ECO:0000312" key="8">
    <source>
        <dbReference type="Araport" id="AT1G12470"/>
    </source>
</evidence>
<evidence type="ECO:0000312" key="9">
    <source>
        <dbReference type="EMBL" id="AAF79641.1"/>
    </source>
</evidence>
<evidence type="ECO:0000312" key="10">
    <source>
        <dbReference type="EMBL" id="AAF88074.1"/>
    </source>
</evidence>
<accession>F4IDS7</accession>
<accession>Q9LN91</accession>
<accession>Q9LN97</accession>
<protein>
    <recommendedName>
        <fullName evidence="6">Vacuolar sorting protein 18</fullName>
    </recommendedName>
</protein>
<feature type="chain" id="PRO_0000444308" description="Vacuolar sorting protein 18">
    <location>
        <begin position="1"/>
        <end position="988"/>
    </location>
</feature>
<feature type="repeat" description="CHCR" evidence="4">
    <location>
        <begin position="589"/>
        <end position="749"/>
    </location>
</feature>
<feature type="zinc finger region" description="RING-type; degenerate" evidence="3">
    <location>
        <begin position="836"/>
        <end position="886"/>
    </location>
</feature>
<feature type="coiled-coil region" evidence="2">
    <location>
        <begin position="785"/>
        <end position="819"/>
    </location>
</feature>
<sequence length="988" mass="112320">MDQGRQVFSVDLLERYATKNRGMITCMAAGNDVIVLGTSKGWIIRYDFGVGSSNDIDLAVGRTGEQSIHKVFVDPGGSHCIATVTGVGGAETFYTHAKWLKPRVLSRLKGLLVNAVAWNRQQITEVSTKEIILGTQDGQLFEMAVDEKDKREKYIKFLFELEELPEAFKALQMETANISSGMRYYVMAVTPTRLYSFTGIGTLESVFASYKERAVHFMELPGEIPNSELHFFIKQRRAVHFAWLSGTGIYHGGLNFGAQHSYPNGDENFVENKALLDYSKLSDGTEAVKPGSMALSEYHFLLLIGNKVKVVNRISEQIIEELQFDITSDSVSRGIIGLCSDASANVFYAYDQNSIFQVSVIDEGRDMWKVYLDLKVYAAALANCRDPLQRDQVYLVQAESAFTDKEYLRAASFYAKINYVISFEEVTLKFISINEPEALRTFLLHKLDNLSKDDKCQITMISTWATELYLDKINRLLLEDDTAIENRDSEYHSVIQEFRAFMSDCKDELDEATTVKILESYGRVEELVYFANLKEQYEIVVLHYIQQGEAKKALEVLQKSSVSVELQYQFAPELIMLDAYETVESWMANKNLNPRRLITAMMRYSSGPHAKNETHEVIKYLEFCVHRLHNEDPGIHSLLLSLYAKQEDDGALLRFLQCKFGKGRENGPEFFYDPKYALRLCLKERRTRACVHIYSMMSMHEEAVALALQIDPELAMAEADKVEDDEDLRKKLWLMVAKHVVKQEKGAKRENIRKAIAFLKETDGLLKIEDILPFFPDFALIDDFKEAICSSLEDYNKQIEQLKEEMNDATRGADNIRNDISALTQRYAVIDRDEECGVCKRKILMMSGDFRMAQGYSSAGPLAPFYVFPCGHSFHAQCLITHVTSCAHEEQAEHILDLQKQLTLLGSETRRDINGNRSDEPITSTTTADKLRSELDDAIASECPFCGELMINEITLPFIKPEDSQYSTSWDLRSETNLANQRTISLPV</sequence>
<keyword id="KW-0175">Coiled coil</keyword>
<keyword id="KW-0963">Cytoplasm</keyword>
<keyword id="KW-0967">Endosome</keyword>
<keyword id="KW-0472">Membrane</keyword>
<keyword id="KW-0479">Metal-binding</keyword>
<keyword id="KW-0653">Protein transport</keyword>
<keyword id="KW-1185">Reference proteome</keyword>
<keyword id="KW-0813">Transport</keyword>
<keyword id="KW-0926">Vacuole</keyword>
<keyword id="KW-0862">Zinc</keyword>
<keyword id="KW-0863">Zinc-finger</keyword>
<gene>
    <name evidence="6" type="primary">VPS18</name>
    <name evidence="8" type="ordered locus">At1g12470</name>
    <name evidence="9" type="ORF">F5O11.22</name>
    <name evidence="10" type="ORF">T12C24.2</name>
</gene>
<reference key="1">
    <citation type="journal article" date="2000" name="Nature">
        <title>Sequence and analysis of chromosome 1 of the plant Arabidopsis thaliana.</title>
        <authorList>
            <person name="Theologis A."/>
            <person name="Ecker J.R."/>
            <person name="Palm C.J."/>
            <person name="Federspiel N.A."/>
            <person name="Kaul S."/>
            <person name="White O."/>
            <person name="Alonso J."/>
            <person name="Altafi H."/>
            <person name="Araujo R."/>
            <person name="Bowman C.L."/>
            <person name="Brooks S.Y."/>
            <person name="Buehler E."/>
            <person name="Chan A."/>
            <person name="Chao Q."/>
            <person name="Chen H."/>
            <person name="Cheuk R.F."/>
            <person name="Chin C.W."/>
            <person name="Chung M.K."/>
            <person name="Conn L."/>
            <person name="Conway A.B."/>
            <person name="Conway A.R."/>
            <person name="Creasy T.H."/>
            <person name="Dewar K."/>
            <person name="Dunn P."/>
            <person name="Etgu P."/>
            <person name="Feldblyum T.V."/>
            <person name="Feng J.-D."/>
            <person name="Fong B."/>
            <person name="Fujii C.Y."/>
            <person name="Gill J.E."/>
            <person name="Goldsmith A.D."/>
            <person name="Haas B."/>
            <person name="Hansen N.F."/>
            <person name="Hughes B."/>
            <person name="Huizar L."/>
            <person name="Hunter J.L."/>
            <person name="Jenkins J."/>
            <person name="Johnson-Hopson C."/>
            <person name="Khan S."/>
            <person name="Khaykin E."/>
            <person name="Kim C.J."/>
            <person name="Koo H.L."/>
            <person name="Kremenetskaia I."/>
            <person name="Kurtz D.B."/>
            <person name="Kwan A."/>
            <person name="Lam B."/>
            <person name="Langin-Hooper S."/>
            <person name="Lee A."/>
            <person name="Lee J.M."/>
            <person name="Lenz C.A."/>
            <person name="Li J.H."/>
            <person name="Li Y.-P."/>
            <person name="Lin X."/>
            <person name="Liu S.X."/>
            <person name="Liu Z.A."/>
            <person name="Luros J.S."/>
            <person name="Maiti R."/>
            <person name="Marziali A."/>
            <person name="Militscher J."/>
            <person name="Miranda M."/>
            <person name="Nguyen M."/>
            <person name="Nierman W.C."/>
            <person name="Osborne B.I."/>
            <person name="Pai G."/>
            <person name="Peterson J."/>
            <person name="Pham P.K."/>
            <person name="Rizzo M."/>
            <person name="Rooney T."/>
            <person name="Rowley D."/>
            <person name="Sakano H."/>
            <person name="Salzberg S.L."/>
            <person name="Schwartz J.R."/>
            <person name="Shinn P."/>
            <person name="Southwick A.M."/>
            <person name="Sun H."/>
            <person name="Tallon L.J."/>
            <person name="Tambunga G."/>
            <person name="Toriumi M.J."/>
            <person name="Town C.D."/>
            <person name="Utterback T."/>
            <person name="Van Aken S."/>
            <person name="Vaysberg M."/>
            <person name="Vysotskaia V.S."/>
            <person name="Walker M."/>
            <person name="Wu D."/>
            <person name="Yu G."/>
            <person name="Fraser C.M."/>
            <person name="Venter J.C."/>
            <person name="Davis R.W."/>
        </authorList>
    </citation>
    <scope>NUCLEOTIDE SEQUENCE [LARGE SCALE GENOMIC DNA]</scope>
    <source>
        <strain>cv. Columbia</strain>
    </source>
</reference>
<reference key="2">
    <citation type="journal article" date="2017" name="Plant J.">
        <title>Araport11: a complete reannotation of the Arabidopsis thaliana reference genome.</title>
        <authorList>
            <person name="Cheng C.Y."/>
            <person name="Krishnakumar V."/>
            <person name="Chan A.P."/>
            <person name="Thibaud-Nissen F."/>
            <person name="Schobel S."/>
            <person name="Town C.D."/>
        </authorList>
    </citation>
    <scope>GENOME REANNOTATION</scope>
    <source>
        <strain>cv. Columbia</strain>
    </source>
</reference>
<reference key="3">
    <citation type="journal article" date="2003" name="Mol. Biol. Cell">
        <title>The AtC-VPS protein complex is localized to the tonoplast and the prevacuolar compartment in arabidopsis.</title>
        <authorList>
            <person name="Rojo E."/>
            <person name="Zouhar J."/>
            <person name="Kovaleva V."/>
            <person name="Hong S."/>
            <person name="Raikhel N.V."/>
        </authorList>
    </citation>
    <scope>IDENTIFICATION</scope>
</reference>
<reference key="4">
    <citation type="journal article" date="2018" name="Proc. Natl. Acad. Sci. U.S.A.">
        <title>Distinct sets of tethering complexes, SNARE complexes, and Rab GTPases mediate membrane fusion at the vacuole in Arabidopsis.</title>
        <authorList>
            <person name="Takemoto K."/>
            <person name="Ebine K."/>
            <person name="Askani J.C."/>
            <person name="Krueger F."/>
            <person name="Gonzalez Z.A."/>
            <person name="Ito E."/>
            <person name="Goh T."/>
            <person name="Schumacher K."/>
            <person name="Nakano A."/>
            <person name="Ueda T."/>
        </authorList>
    </citation>
    <scope>FUNCTION</scope>
    <scope>DISRUPTION PHENOTYPE</scope>
    <scope>SUBUNIT</scope>
    <scope>SUBCELLULAR LOCATION</scope>
    <scope>IDENTIFICATION BY MASS SPECTROMETRY</scope>
</reference>
<organism>
    <name type="scientific">Arabidopsis thaliana</name>
    <name type="common">Mouse-ear cress</name>
    <dbReference type="NCBI Taxonomy" id="3702"/>
    <lineage>
        <taxon>Eukaryota</taxon>
        <taxon>Viridiplantae</taxon>
        <taxon>Streptophyta</taxon>
        <taxon>Embryophyta</taxon>
        <taxon>Tracheophyta</taxon>
        <taxon>Spermatophyta</taxon>
        <taxon>Magnoliopsida</taxon>
        <taxon>eudicotyledons</taxon>
        <taxon>Gunneridae</taxon>
        <taxon>Pentapetalae</taxon>
        <taxon>rosids</taxon>
        <taxon>malvids</taxon>
        <taxon>Brassicales</taxon>
        <taxon>Brassicaceae</taxon>
        <taxon>Camelineae</taxon>
        <taxon>Arabidopsis</taxon>
    </lineage>
</organism>
<proteinExistence type="evidence at protein level"/>
<name>VPS18_ARATH</name>
<dbReference type="EMBL" id="AC025416">
    <property type="protein sequence ID" value="AAF79641.1"/>
    <property type="status" value="ALT_SEQ"/>
    <property type="molecule type" value="Genomic_DNA"/>
</dbReference>
<dbReference type="EMBL" id="AC025417">
    <property type="protein sequence ID" value="AAF88074.1"/>
    <property type="status" value="ALT_SEQ"/>
    <property type="molecule type" value="Genomic_DNA"/>
</dbReference>
<dbReference type="EMBL" id="CP002684">
    <property type="protein sequence ID" value="AEE28887.1"/>
    <property type="molecule type" value="Genomic_DNA"/>
</dbReference>
<dbReference type="PIR" id="B86259">
    <property type="entry name" value="B86259"/>
</dbReference>
<dbReference type="RefSeq" id="NP_172709.2">
    <property type="nucleotide sequence ID" value="NM_101119.7"/>
</dbReference>
<dbReference type="SMR" id="F4IDS7"/>
<dbReference type="FunCoup" id="F4IDS7">
    <property type="interactions" value="4719"/>
</dbReference>
<dbReference type="STRING" id="3702.F4IDS7"/>
<dbReference type="GlyGen" id="F4IDS7">
    <property type="glycosylation" value="1 site"/>
</dbReference>
<dbReference type="iPTMnet" id="F4IDS7"/>
<dbReference type="PaxDb" id="3702-AT1G12470.1"/>
<dbReference type="ProteomicsDB" id="242704"/>
<dbReference type="EnsemblPlants" id="AT1G12470.1">
    <property type="protein sequence ID" value="AT1G12470.1"/>
    <property type="gene ID" value="AT1G12470"/>
</dbReference>
<dbReference type="GeneID" id="837804"/>
<dbReference type="Gramene" id="AT1G12470.1">
    <property type="protein sequence ID" value="AT1G12470.1"/>
    <property type="gene ID" value="AT1G12470"/>
</dbReference>
<dbReference type="KEGG" id="ath:AT1G12470"/>
<dbReference type="Araport" id="AT1G12470"/>
<dbReference type="TAIR" id="AT1G12470">
    <property type="gene designation" value="VPS18"/>
</dbReference>
<dbReference type="eggNOG" id="KOG2034">
    <property type="taxonomic scope" value="Eukaryota"/>
</dbReference>
<dbReference type="HOGENOM" id="CLU_003488_1_0_1"/>
<dbReference type="InParanoid" id="F4IDS7"/>
<dbReference type="OMA" id="WIQREKW"/>
<dbReference type="PRO" id="PR:F4IDS7"/>
<dbReference type="Proteomes" id="UP000006548">
    <property type="component" value="Chromosome 1"/>
</dbReference>
<dbReference type="ExpressionAtlas" id="F4IDS7">
    <property type="expression patterns" value="baseline and differential"/>
</dbReference>
<dbReference type="GO" id="GO:0033263">
    <property type="term" value="C:CORVET complex"/>
    <property type="evidence" value="ECO:0000314"/>
    <property type="project" value="UniProtKB"/>
</dbReference>
<dbReference type="GO" id="GO:0005737">
    <property type="term" value="C:cytoplasm"/>
    <property type="evidence" value="ECO:0000314"/>
    <property type="project" value="UniProtKB"/>
</dbReference>
<dbReference type="GO" id="GO:0010008">
    <property type="term" value="C:endosome membrane"/>
    <property type="evidence" value="ECO:0007669"/>
    <property type="project" value="UniProtKB-SubCell"/>
</dbReference>
<dbReference type="GO" id="GO:0005576">
    <property type="term" value="C:extracellular region"/>
    <property type="evidence" value="ECO:0007005"/>
    <property type="project" value="TAIR"/>
</dbReference>
<dbReference type="GO" id="GO:0030897">
    <property type="term" value="C:HOPS complex"/>
    <property type="evidence" value="ECO:0000314"/>
    <property type="project" value="UniProtKB"/>
</dbReference>
<dbReference type="GO" id="GO:0009705">
    <property type="term" value="C:plant-type vacuole membrane"/>
    <property type="evidence" value="ECO:0000314"/>
    <property type="project" value="UniProtKB"/>
</dbReference>
<dbReference type="GO" id="GO:0008270">
    <property type="term" value="F:zinc ion binding"/>
    <property type="evidence" value="ECO:0007669"/>
    <property type="project" value="UniProtKB-KW"/>
</dbReference>
<dbReference type="GO" id="GO:0006886">
    <property type="term" value="P:intracellular protein transport"/>
    <property type="evidence" value="ECO:0007669"/>
    <property type="project" value="InterPro"/>
</dbReference>
<dbReference type="GO" id="GO:0010015">
    <property type="term" value="P:root morphogenesis"/>
    <property type="evidence" value="ECO:0000315"/>
    <property type="project" value="UniProtKB"/>
</dbReference>
<dbReference type="GO" id="GO:0016192">
    <property type="term" value="P:vesicle-mediated transport"/>
    <property type="evidence" value="ECO:0007669"/>
    <property type="project" value="InterPro"/>
</dbReference>
<dbReference type="InterPro" id="IPR000547">
    <property type="entry name" value="Clathrin_H-chain/VPS_repeat"/>
</dbReference>
<dbReference type="InterPro" id="IPR007810">
    <property type="entry name" value="Pep3_Vps18"/>
</dbReference>
<dbReference type="InterPro" id="IPR001841">
    <property type="entry name" value="Znf_RING"/>
</dbReference>
<dbReference type="PANTHER" id="PTHR23323">
    <property type="entry name" value="VACUOLAR PROTEIN SORTING-ASSOCIATED PROTEIN"/>
    <property type="match status" value="1"/>
</dbReference>
<dbReference type="PANTHER" id="PTHR23323:SF26">
    <property type="entry name" value="VACUOLAR PROTEIN SORTING-ASSOCIATED PROTEIN 18 HOMOLOG"/>
    <property type="match status" value="1"/>
</dbReference>
<dbReference type="Pfam" id="PF05131">
    <property type="entry name" value="Pep3_Vps18"/>
    <property type="match status" value="1"/>
</dbReference>
<dbReference type="SMART" id="SM00184">
    <property type="entry name" value="RING"/>
    <property type="match status" value="1"/>
</dbReference>
<dbReference type="SUPFAM" id="SSF57850">
    <property type="entry name" value="RING/U-box"/>
    <property type="match status" value="1"/>
</dbReference>
<dbReference type="PROSITE" id="PS50236">
    <property type="entry name" value="CHCR"/>
    <property type="match status" value="1"/>
</dbReference>